<proteinExistence type="evidence at protein level"/>
<comment type="subcellular location">
    <subcellularLocation>
        <location evidence="2">Mitochondrion</location>
    </subcellularLocation>
</comment>
<comment type="disruption phenotype">
    <text evidence="4">Increases frequency of mitochondrial genome loss.</text>
</comment>
<comment type="miscellaneous">
    <text evidence="3">Present with 8200 molecules/cell in log phase SD medium.</text>
</comment>
<comment type="similarity">
    <text evidence="5">Belongs to the AIM9 family.</text>
</comment>
<name>AIM9_YEAST</name>
<protein>
    <recommendedName>
        <fullName>Altered inheritance of mitochondria protein 9, mitochondrial</fullName>
    </recommendedName>
    <alternativeName>
        <fullName>Found in mitochondrial proteome protein 29</fullName>
    </alternativeName>
</protein>
<feature type="transit peptide" description="Mitochondrion" evidence="1">
    <location>
        <begin position="1"/>
        <end position="43"/>
    </location>
</feature>
<feature type="chain" id="PRO_0000202637" description="Altered inheritance of mitochondria protein 9, mitochondrial">
    <location>
        <begin position="44"/>
        <end position="627"/>
    </location>
</feature>
<reference key="1">
    <citation type="journal article" date="1997" name="Nature">
        <title>The nucleotide sequence of Saccharomyces cerevisiae chromosome V.</title>
        <authorList>
            <person name="Dietrich F.S."/>
            <person name="Mulligan J.T."/>
            <person name="Hennessy K.M."/>
            <person name="Yelton M.A."/>
            <person name="Allen E."/>
            <person name="Araujo R."/>
            <person name="Aviles E."/>
            <person name="Berno A."/>
            <person name="Brennan T."/>
            <person name="Carpenter J."/>
            <person name="Chen E."/>
            <person name="Cherry J.M."/>
            <person name="Chung E."/>
            <person name="Duncan M."/>
            <person name="Guzman E."/>
            <person name="Hartzell G."/>
            <person name="Hunicke-Smith S."/>
            <person name="Hyman R.W."/>
            <person name="Kayser A."/>
            <person name="Komp C."/>
            <person name="Lashkari D."/>
            <person name="Lew H."/>
            <person name="Lin D."/>
            <person name="Mosedale D."/>
            <person name="Nakahara K."/>
            <person name="Namath A."/>
            <person name="Norgren R."/>
            <person name="Oefner P."/>
            <person name="Oh C."/>
            <person name="Petel F.X."/>
            <person name="Roberts D."/>
            <person name="Sehl P."/>
            <person name="Schramm S."/>
            <person name="Shogren T."/>
            <person name="Smith V."/>
            <person name="Taylor P."/>
            <person name="Wei Y."/>
            <person name="Botstein D."/>
            <person name="Davis R.W."/>
        </authorList>
    </citation>
    <scope>NUCLEOTIDE SEQUENCE [LARGE SCALE GENOMIC DNA]</scope>
    <source>
        <strain>ATCC 204508 / S288c</strain>
    </source>
</reference>
<reference key="2">
    <citation type="journal article" date="2014" name="G3 (Bethesda)">
        <title>The reference genome sequence of Saccharomyces cerevisiae: Then and now.</title>
        <authorList>
            <person name="Engel S.R."/>
            <person name="Dietrich F.S."/>
            <person name="Fisk D.G."/>
            <person name="Binkley G."/>
            <person name="Balakrishnan R."/>
            <person name="Costanzo M.C."/>
            <person name="Dwight S.S."/>
            <person name="Hitz B.C."/>
            <person name="Karra K."/>
            <person name="Nash R.S."/>
            <person name="Weng S."/>
            <person name="Wong E.D."/>
            <person name="Lloyd P."/>
            <person name="Skrzypek M.S."/>
            <person name="Miyasato S.R."/>
            <person name="Simison M."/>
            <person name="Cherry J.M."/>
        </authorList>
    </citation>
    <scope>GENOME REANNOTATION</scope>
    <source>
        <strain>ATCC 204508 / S288c</strain>
    </source>
</reference>
<reference key="3">
    <citation type="journal article" date="2003" name="Nature">
        <title>Global analysis of protein localization in budding yeast.</title>
        <authorList>
            <person name="Huh W.-K."/>
            <person name="Falvo J.V."/>
            <person name="Gerke L.C."/>
            <person name="Carroll A.S."/>
            <person name="Howson R.W."/>
            <person name="Weissman J.S."/>
            <person name="O'Shea E.K."/>
        </authorList>
    </citation>
    <scope>SUBCELLULAR LOCATION [LARGE SCALE ANALYSIS]</scope>
</reference>
<reference key="4">
    <citation type="journal article" date="2003" name="Nature">
        <title>Global analysis of protein expression in yeast.</title>
        <authorList>
            <person name="Ghaemmaghami S."/>
            <person name="Huh W.-K."/>
            <person name="Bower K."/>
            <person name="Howson R.W."/>
            <person name="Belle A."/>
            <person name="Dephoure N."/>
            <person name="O'Shea E.K."/>
            <person name="Weissman J.S."/>
        </authorList>
    </citation>
    <scope>LEVEL OF PROTEIN EXPRESSION [LARGE SCALE ANALYSIS]</scope>
</reference>
<reference key="5">
    <citation type="journal article" date="2009" name="PLoS Genet.">
        <title>Computationally driven, quantitative experiments discover genes required for mitochondrial biogenesis.</title>
        <authorList>
            <person name="Hess D.C."/>
            <person name="Myers C.L."/>
            <person name="Huttenhower C."/>
            <person name="Hibbs M.A."/>
            <person name="Hayes A.P."/>
            <person name="Paw J."/>
            <person name="Clore J.J."/>
            <person name="Mendoza R.M."/>
            <person name="Luis B.S."/>
            <person name="Nislow C."/>
            <person name="Giaever G."/>
            <person name="Costanzo M."/>
            <person name="Troyanskaya O.G."/>
            <person name="Caudy A.A."/>
        </authorList>
    </citation>
    <scope>DISRUPTION PHENOTYPE</scope>
</reference>
<dbReference type="EMBL" id="U18839">
    <property type="protein sequence ID" value="AAB64635.1"/>
    <property type="molecule type" value="Genomic_DNA"/>
</dbReference>
<dbReference type="EMBL" id="BK006939">
    <property type="protein sequence ID" value="DAA07741.1"/>
    <property type="molecule type" value="Genomic_DNA"/>
</dbReference>
<dbReference type="PIR" id="S50583">
    <property type="entry name" value="S50583"/>
</dbReference>
<dbReference type="RefSeq" id="NP_011003.1">
    <property type="nucleotide sequence ID" value="NM_001178971.1"/>
</dbReference>
<dbReference type="BioGRID" id="36825">
    <property type="interactions" value="49"/>
</dbReference>
<dbReference type="FunCoup" id="P40053">
    <property type="interactions" value="32"/>
</dbReference>
<dbReference type="IntAct" id="P40053">
    <property type="interactions" value="8"/>
</dbReference>
<dbReference type="STRING" id="4932.YER080W"/>
<dbReference type="iPTMnet" id="P40053"/>
<dbReference type="PaxDb" id="4932-YER080W"/>
<dbReference type="PeptideAtlas" id="P40053"/>
<dbReference type="EnsemblFungi" id="YER080W_mRNA">
    <property type="protein sequence ID" value="YER080W"/>
    <property type="gene ID" value="YER080W"/>
</dbReference>
<dbReference type="GeneID" id="856813"/>
<dbReference type="KEGG" id="sce:YER080W"/>
<dbReference type="AGR" id="SGD:S000000882"/>
<dbReference type="SGD" id="S000000882">
    <property type="gene designation" value="AIM9"/>
</dbReference>
<dbReference type="VEuPathDB" id="FungiDB:YER080W"/>
<dbReference type="eggNOG" id="ENOG502QV1E">
    <property type="taxonomic scope" value="Eukaryota"/>
</dbReference>
<dbReference type="HOGENOM" id="CLU_019189_0_1_1"/>
<dbReference type="InParanoid" id="P40053"/>
<dbReference type="OMA" id="GWIPQDM"/>
<dbReference type="OrthoDB" id="2968323at2759"/>
<dbReference type="BioCyc" id="YEAST:G3O-30251-MONOMER"/>
<dbReference type="BioGRID-ORCS" id="856813">
    <property type="hits" value="0 hits in 10 CRISPR screens"/>
</dbReference>
<dbReference type="PRO" id="PR:P40053"/>
<dbReference type="Proteomes" id="UP000002311">
    <property type="component" value="Chromosome V"/>
</dbReference>
<dbReference type="RNAct" id="P40053">
    <property type="molecule type" value="protein"/>
</dbReference>
<dbReference type="GO" id="GO:0005739">
    <property type="term" value="C:mitochondrion"/>
    <property type="evidence" value="ECO:0007005"/>
    <property type="project" value="SGD"/>
</dbReference>
<dbReference type="InterPro" id="IPR011009">
    <property type="entry name" value="Kinase-like_dom_sf"/>
</dbReference>
<dbReference type="InterPro" id="IPR051035">
    <property type="entry name" value="Mito_inheritance_9"/>
</dbReference>
<dbReference type="PANTHER" id="PTHR36091">
    <property type="entry name" value="ALTERED INHERITANCE OF MITOCHONDRIA PROTEIN 9, MITOCHONDRIAL"/>
    <property type="match status" value="1"/>
</dbReference>
<dbReference type="PANTHER" id="PTHR36091:SF1">
    <property type="entry name" value="ALTERED INHERITANCE OF MITOCHONDRIA PROTEIN 9, MITOCHONDRIAL"/>
    <property type="match status" value="1"/>
</dbReference>
<dbReference type="SUPFAM" id="SSF56112">
    <property type="entry name" value="Protein kinase-like (PK-like)"/>
    <property type="match status" value="1"/>
</dbReference>
<sequence>MIRYTVAGHSRRCVVGASKRVGAIKCITVAATKRFISNKPNEVFTKLTNDNDPKRDAFFKYTWGSWLKNDKQEKEKRFTKFSIEGLNRILNDIYIQSNEMAKAPDGKILPPVFNKNLTVSLVNNVVPKNIGKINPNEKVQVTTLSSIHEGKHHRIYKVDTNLNKAFILRIPYPLENENTLSYRIRSEVATMDFADLKLGIKVPKIFCYGVNSLNPVRQPFVLQEFIEGELLMKDWDPLIEDGSSNQKKYDNVIKQVSDFQSKLVSLKLNAFGSIYFNNDLKDGNEKEFVKEDIYDGETNPDLQNRWKIGPSVERCLWRHKSHLDFHKQMKPFLGPWPKKSPMDIIKNTGLLEAENAKTRIAMKEAGSSAELMYPRTLKEQITTYENLAKIAPDLFNVKTKAIPNMQELLSPRLFHPDLDPMNIIVNKEAQEAYLLDFEGACTKPFILQNSPQFIAYDGPKIYDLKEDITDFDKLSEAEKVQYQFMYKRTRNQHQWEKKLNDNNPKLITAVAPPVKLLRSPYIAAVERKTEEEYLLIDESLLQLKEVWDIFAQNELVNQKKFPLNYSKEDIERHVEDLQKLHEKLISTPFAATQGWIPQDMFDQLLNSGSIVKQENGDYTVKQPEATK</sequence>
<accession>P40053</accession>
<accession>D3DLY7</accession>
<organism>
    <name type="scientific">Saccharomyces cerevisiae (strain ATCC 204508 / S288c)</name>
    <name type="common">Baker's yeast</name>
    <dbReference type="NCBI Taxonomy" id="559292"/>
    <lineage>
        <taxon>Eukaryota</taxon>
        <taxon>Fungi</taxon>
        <taxon>Dikarya</taxon>
        <taxon>Ascomycota</taxon>
        <taxon>Saccharomycotina</taxon>
        <taxon>Saccharomycetes</taxon>
        <taxon>Saccharomycetales</taxon>
        <taxon>Saccharomycetaceae</taxon>
        <taxon>Saccharomyces</taxon>
    </lineage>
</organism>
<gene>
    <name type="primary">AIM9</name>
    <name type="synonym">FMP29</name>
    <name type="ordered locus">YER080W</name>
</gene>
<evidence type="ECO:0000255" key="1"/>
<evidence type="ECO:0000269" key="2">
    <source>
    </source>
</evidence>
<evidence type="ECO:0000269" key="3">
    <source>
    </source>
</evidence>
<evidence type="ECO:0000269" key="4">
    <source>
    </source>
</evidence>
<evidence type="ECO:0000305" key="5"/>
<keyword id="KW-0496">Mitochondrion</keyword>
<keyword id="KW-1185">Reference proteome</keyword>
<keyword id="KW-0809">Transit peptide</keyword>